<accession>Q97E86</accession>
<keyword id="KW-0216">Detoxification</keyword>
<keyword id="KW-0285">Flavoprotein</keyword>
<keyword id="KW-0288">FMN</keyword>
<keyword id="KW-0521">NADP</keyword>
<keyword id="KW-0560">Oxidoreductase</keyword>
<keyword id="KW-1185">Reference proteome</keyword>
<sequence length="339" mass="37677">MKIFEAYTIKNMCLKNRIVMPPMCMYSSDNTGNINDFHLVHYTTRSIGGVGFIIVEATGITPNGRISDKDLGIWSEKHAEGLSFLVKEVKKYGSKIAIQLNHSGRKYEGTSGEPVAPSALAFDENSKTPKELTKNEIKEIILAFKAAAKRAEKAGFDAIEIHGAHGYLINQFLSPLSNFRDDEYGGSTENRTRFLKEVLEAVREVWPKEKPILLRVSAEDYRGGSGITPNEMVNIINIVKDLIDVVDVSSGGVAPAHINLYPGYQVKLSEVIKNECNVPTIAVGLICDINMVEEILSNNRADLVALGRELLRNPYFVLSSARLKNINIDFPKPYERAFN</sequence>
<comment type="function">
    <text evidence="1">Catalyzes the reduction of the double bond of an array of alpha,beta-unsaturated aldehydes and ketones. It also reduces the nitro group of nitroester and nitroaromatic compounds. It could have a role in detoxification processes.</text>
</comment>
<comment type="catalytic activity">
    <reaction evidence="1">
        <text>A + NADPH + H(+) = AH2 + NADP(+)</text>
        <dbReference type="Rhea" id="RHEA:13149"/>
        <dbReference type="ChEBI" id="CHEBI:13193"/>
        <dbReference type="ChEBI" id="CHEBI:15378"/>
        <dbReference type="ChEBI" id="CHEBI:17499"/>
        <dbReference type="ChEBI" id="CHEBI:57783"/>
        <dbReference type="ChEBI" id="CHEBI:58349"/>
        <dbReference type="EC" id="1.6.99.1"/>
    </reaction>
</comment>
<comment type="cofactor">
    <cofactor evidence="1">
        <name>FMN</name>
        <dbReference type="ChEBI" id="CHEBI:58210"/>
    </cofactor>
</comment>
<comment type="subunit">
    <text evidence="1">Homotetramer.</text>
</comment>
<comment type="similarity">
    <text evidence="1">Belongs to the NADH:flavin oxidoreductase/NADH oxidase family. NamA subfamily.</text>
</comment>
<dbReference type="EC" id="1.6.99.1" evidence="1"/>
<dbReference type="EMBL" id="AE001437">
    <property type="protein sequence ID" value="AAK81164.1"/>
    <property type="molecule type" value="Genomic_DNA"/>
</dbReference>
<dbReference type="PIR" id="A97297">
    <property type="entry name" value="A97297"/>
</dbReference>
<dbReference type="RefSeq" id="NP_349824.1">
    <property type="nucleotide sequence ID" value="NC_003030.1"/>
</dbReference>
<dbReference type="RefSeq" id="WP_010966504.1">
    <property type="nucleotide sequence ID" value="NC_003030.1"/>
</dbReference>
<dbReference type="SMR" id="Q97E86"/>
<dbReference type="STRING" id="272562.CA_C3229"/>
<dbReference type="GeneID" id="44999726"/>
<dbReference type="KEGG" id="cac:CA_C3229"/>
<dbReference type="PATRIC" id="fig|272562.8.peg.3407"/>
<dbReference type="eggNOG" id="COG1902">
    <property type="taxonomic scope" value="Bacteria"/>
</dbReference>
<dbReference type="HOGENOM" id="CLU_012153_2_1_9"/>
<dbReference type="OrthoDB" id="9772736at2"/>
<dbReference type="Proteomes" id="UP000000814">
    <property type="component" value="Chromosome"/>
</dbReference>
<dbReference type="GO" id="GO:0010181">
    <property type="term" value="F:FMN binding"/>
    <property type="evidence" value="ECO:0007669"/>
    <property type="project" value="UniProtKB-UniRule"/>
</dbReference>
<dbReference type="GO" id="GO:0050661">
    <property type="term" value="F:NADP binding"/>
    <property type="evidence" value="ECO:0007669"/>
    <property type="project" value="UniProtKB-UniRule"/>
</dbReference>
<dbReference type="GO" id="GO:0003959">
    <property type="term" value="F:NADPH dehydrogenase activity"/>
    <property type="evidence" value="ECO:0007669"/>
    <property type="project" value="UniProtKB-UniRule"/>
</dbReference>
<dbReference type="GO" id="GO:0009636">
    <property type="term" value="P:response to toxic substance"/>
    <property type="evidence" value="ECO:0007669"/>
    <property type="project" value="UniProtKB-KW"/>
</dbReference>
<dbReference type="CDD" id="cd02932">
    <property type="entry name" value="OYE_YqiM_FMN"/>
    <property type="match status" value="1"/>
</dbReference>
<dbReference type="Gene3D" id="3.20.20.70">
    <property type="entry name" value="Aldolase class I"/>
    <property type="match status" value="1"/>
</dbReference>
<dbReference type="HAMAP" id="MF_01614">
    <property type="entry name" value="NamA"/>
    <property type="match status" value="1"/>
</dbReference>
<dbReference type="InterPro" id="IPR013785">
    <property type="entry name" value="Aldolase_TIM"/>
</dbReference>
<dbReference type="InterPro" id="IPR023663">
    <property type="entry name" value="NADPH_DH_bac"/>
</dbReference>
<dbReference type="InterPro" id="IPR001155">
    <property type="entry name" value="OxRdtase_FMN_N"/>
</dbReference>
<dbReference type="InterPro" id="IPR044152">
    <property type="entry name" value="YqjM-like"/>
</dbReference>
<dbReference type="NCBIfam" id="NF010047">
    <property type="entry name" value="PRK13523.1"/>
    <property type="match status" value="1"/>
</dbReference>
<dbReference type="PANTHER" id="PTHR43303">
    <property type="entry name" value="NADPH DEHYDROGENASE C23G7.10C-RELATED"/>
    <property type="match status" value="1"/>
</dbReference>
<dbReference type="PANTHER" id="PTHR43303:SF4">
    <property type="entry name" value="NADPH DEHYDROGENASE C23G7.10C-RELATED"/>
    <property type="match status" value="1"/>
</dbReference>
<dbReference type="Pfam" id="PF00724">
    <property type="entry name" value="Oxidored_FMN"/>
    <property type="match status" value="1"/>
</dbReference>
<dbReference type="SUPFAM" id="SSF51395">
    <property type="entry name" value="FMN-linked oxidoreductases"/>
    <property type="match status" value="1"/>
</dbReference>
<name>NAMA_CLOAB</name>
<proteinExistence type="inferred from homology"/>
<organism>
    <name type="scientific">Clostridium acetobutylicum (strain ATCC 824 / DSM 792 / JCM 1419 / IAM 19013 / LMG 5710 / NBRC 13948 / NRRL B-527 / VKM B-1787 / 2291 / W)</name>
    <dbReference type="NCBI Taxonomy" id="272562"/>
    <lineage>
        <taxon>Bacteria</taxon>
        <taxon>Bacillati</taxon>
        <taxon>Bacillota</taxon>
        <taxon>Clostridia</taxon>
        <taxon>Eubacteriales</taxon>
        <taxon>Clostridiaceae</taxon>
        <taxon>Clostridium</taxon>
    </lineage>
</organism>
<gene>
    <name evidence="1" type="primary">namA</name>
    <name type="ordered locus">CA_C3229</name>
</gene>
<reference key="1">
    <citation type="journal article" date="2001" name="J. Bacteriol.">
        <title>Genome sequence and comparative analysis of the solvent-producing bacterium Clostridium acetobutylicum.</title>
        <authorList>
            <person name="Noelling J."/>
            <person name="Breton G."/>
            <person name="Omelchenko M.V."/>
            <person name="Makarova K.S."/>
            <person name="Zeng Q."/>
            <person name="Gibson R."/>
            <person name="Lee H.M."/>
            <person name="Dubois J."/>
            <person name="Qiu D."/>
            <person name="Hitti J."/>
            <person name="Wolf Y.I."/>
            <person name="Tatusov R.L."/>
            <person name="Sabathe F."/>
            <person name="Doucette-Stamm L.A."/>
            <person name="Soucaille P."/>
            <person name="Daly M.J."/>
            <person name="Bennett G.N."/>
            <person name="Koonin E.V."/>
            <person name="Smith D.R."/>
        </authorList>
    </citation>
    <scope>NUCLEOTIDE SEQUENCE [LARGE SCALE GENOMIC DNA]</scope>
    <source>
        <strain>ATCC 824 / DSM 792 / JCM 1419 / IAM 19013 / LMG 5710 / NBRC 13948 / NRRL B-527 / VKM B-1787 / 2291 / W</strain>
    </source>
</reference>
<feature type="chain" id="PRO_0000216120" description="NADPH dehydrogenase">
    <location>
        <begin position="1"/>
        <end position="339"/>
    </location>
</feature>
<feature type="binding site" evidence="1">
    <location>
        <begin position="21"/>
        <end position="24"/>
    </location>
    <ligand>
        <name>FMN</name>
        <dbReference type="ChEBI" id="CHEBI:58210"/>
    </ligand>
</feature>
<feature type="binding site" evidence="1">
    <location>
        <position position="26"/>
    </location>
    <ligand>
        <name>substrate</name>
    </ligand>
</feature>
<feature type="binding site" evidence="1">
    <location>
        <position position="57"/>
    </location>
    <ligand>
        <name>FMN</name>
        <dbReference type="ChEBI" id="CHEBI:58210"/>
    </ligand>
</feature>
<feature type="binding site" evidence="1">
    <location>
        <position position="99"/>
    </location>
    <ligand>
        <name>FMN</name>
        <dbReference type="ChEBI" id="CHEBI:58210"/>
    </ligand>
</feature>
<feature type="binding site" evidence="1">
    <location>
        <begin position="162"/>
        <end position="165"/>
    </location>
    <ligand>
        <name>substrate</name>
    </ligand>
</feature>
<feature type="binding site" evidence="1">
    <location>
        <position position="215"/>
    </location>
    <ligand>
        <name>FMN</name>
        <dbReference type="ChEBI" id="CHEBI:58210"/>
    </ligand>
</feature>
<feature type="binding site" evidence="1">
    <location>
        <begin position="307"/>
        <end position="308"/>
    </location>
    <ligand>
        <name>FMN</name>
        <dbReference type="ChEBI" id="CHEBI:58210"/>
    </ligand>
</feature>
<evidence type="ECO:0000255" key="1">
    <source>
        <dbReference type="HAMAP-Rule" id="MF_01614"/>
    </source>
</evidence>
<protein>
    <recommendedName>
        <fullName evidence="1">NADPH dehydrogenase</fullName>
        <ecNumber evidence="1">1.6.99.1</ecNumber>
    </recommendedName>
</protein>